<gene>
    <name type="primary">Ctsr</name>
    <name type="synonym">Catr</name>
</gene>
<reference key="1">
    <citation type="journal article" date="2000" name="Biochim. Biophys. Acta">
        <title>Characterization of mouse cathepsin R, a new member of a family of placentally expressed cysteine proteases (PECs).</title>
        <authorList>
            <person name="Sol-Church K."/>
            <person name="Frenck J."/>
            <person name="Bertenshaw G."/>
            <person name="Mason R.W."/>
        </authorList>
    </citation>
    <scope>NUCLEOTIDE SEQUENCE [MRNA]</scope>
    <scope>TISSUE SPECIFICITY</scope>
    <scope>DEVELOPMENTAL STAGE</scope>
    <source>
        <strain>C57BL/6J</strain>
        <tissue>Placenta</tissue>
    </source>
</reference>
<reference key="2">
    <citation type="journal article" date="2002" name="Genomics">
        <title>Identification and characterization of a dense cluster of placenta-specific cysteine peptidase genes and related genes on mouse chromosome 13.</title>
        <authorList>
            <person name="Deussing J."/>
            <person name="Kouadio M."/>
            <person name="Rehman S."/>
            <person name="Werber I."/>
            <person name="Schwinde A."/>
            <person name="Peters C."/>
        </authorList>
    </citation>
    <scope>NUCLEOTIDE SEQUENCE [MRNA]</scope>
    <source>
        <strain>C57BL/6J</strain>
        <tissue>Placenta</tissue>
    </source>
</reference>
<reference key="3">
    <citation type="journal article" date="2005" name="Science">
        <title>The transcriptional landscape of the mammalian genome.</title>
        <authorList>
            <person name="Carninci P."/>
            <person name="Kasukawa T."/>
            <person name="Katayama S."/>
            <person name="Gough J."/>
            <person name="Frith M.C."/>
            <person name="Maeda N."/>
            <person name="Oyama R."/>
            <person name="Ravasi T."/>
            <person name="Lenhard B."/>
            <person name="Wells C."/>
            <person name="Kodzius R."/>
            <person name="Shimokawa K."/>
            <person name="Bajic V.B."/>
            <person name="Brenner S.E."/>
            <person name="Batalov S."/>
            <person name="Forrest A.R."/>
            <person name="Zavolan M."/>
            <person name="Davis M.J."/>
            <person name="Wilming L.G."/>
            <person name="Aidinis V."/>
            <person name="Allen J.E."/>
            <person name="Ambesi-Impiombato A."/>
            <person name="Apweiler R."/>
            <person name="Aturaliya R.N."/>
            <person name="Bailey T.L."/>
            <person name="Bansal M."/>
            <person name="Baxter L."/>
            <person name="Beisel K.W."/>
            <person name="Bersano T."/>
            <person name="Bono H."/>
            <person name="Chalk A.M."/>
            <person name="Chiu K.P."/>
            <person name="Choudhary V."/>
            <person name="Christoffels A."/>
            <person name="Clutterbuck D.R."/>
            <person name="Crowe M.L."/>
            <person name="Dalla E."/>
            <person name="Dalrymple B.P."/>
            <person name="de Bono B."/>
            <person name="Della Gatta G."/>
            <person name="di Bernardo D."/>
            <person name="Down T."/>
            <person name="Engstrom P."/>
            <person name="Fagiolini M."/>
            <person name="Faulkner G."/>
            <person name="Fletcher C.F."/>
            <person name="Fukushima T."/>
            <person name="Furuno M."/>
            <person name="Futaki S."/>
            <person name="Gariboldi M."/>
            <person name="Georgii-Hemming P."/>
            <person name="Gingeras T.R."/>
            <person name="Gojobori T."/>
            <person name="Green R.E."/>
            <person name="Gustincich S."/>
            <person name="Harbers M."/>
            <person name="Hayashi Y."/>
            <person name="Hensch T.K."/>
            <person name="Hirokawa N."/>
            <person name="Hill D."/>
            <person name="Huminiecki L."/>
            <person name="Iacono M."/>
            <person name="Ikeo K."/>
            <person name="Iwama A."/>
            <person name="Ishikawa T."/>
            <person name="Jakt M."/>
            <person name="Kanapin A."/>
            <person name="Katoh M."/>
            <person name="Kawasawa Y."/>
            <person name="Kelso J."/>
            <person name="Kitamura H."/>
            <person name="Kitano H."/>
            <person name="Kollias G."/>
            <person name="Krishnan S.P."/>
            <person name="Kruger A."/>
            <person name="Kummerfeld S.K."/>
            <person name="Kurochkin I.V."/>
            <person name="Lareau L.F."/>
            <person name="Lazarevic D."/>
            <person name="Lipovich L."/>
            <person name="Liu J."/>
            <person name="Liuni S."/>
            <person name="McWilliam S."/>
            <person name="Madan Babu M."/>
            <person name="Madera M."/>
            <person name="Marchionni L."/>
            <person name="Matsuda H."/>
            <person name="Matsuzawa S."/>
            <person name="Miki H."/>
            <person name="Mignone F."/>
            <person name="Miyake S."/>
            <person name="Morris K."/>
            <person name="Mottagui-Tabar S."/>
            <person name="Mulder N."/>
            <person name="Nakano N."/>
            <person name="Nakauchi H."/>
            <person name="Ng P."/>
            <person name="Nilsson R."/>
            <person name="Nishiguchi S."/>
            <person name="Nishikawa S."/>
            <person name="Nori F."/>
            <person name="Ohara O."/>
            <person name="Okazaki Y."/>
            <person name="Orlando V."/>
            <person name="Pang K.C."/>
            <person name="Pavan W.J."/>
            <person name="Pavesi G."/>
            <person name="Pesole G."/>
            <person name="Petrovsky N."/>
            <person name="Piazza S."/>
            <person name="Reed J."/>
            <person name="Reid J.F."/>
            <person name="Ring B.Z."/>
            <person name="Ringwald M."/>
            <person name="Rost B."/>
            <person name="Ruan Y."/>
            <person name="Salzberg S.L."/>
            <person name="Sandelin A."/>
            <person name="Schneider C."/>
            <person name="Schoenbach C."/>
            <person name="Sekiguchi K."/>
            <person name="Semple C.A."/>
            <person name="Seno S."/>
            <person name="Sessa L."/>
            <person name="Sheng Y."/>
            <person name="Shibata Y."/>
            <person name="Shimada H."/>
            <person name="Shimada K."/>
            <person name="Silva D."/>
            <person name="Sinclair B."/>
            <person name="Sperling S."/>
            <person name="Stupka E."/>
            <person name="Sugiura K."/>
            <person name="Sultana R."/>
            <person name="Takenaka Y."/>
            <person name="Taki K."/>
            <person name="Tammoja K."/>
            <person name="Tan S.L."/>
            <person name="Tang S."/>
            <person name="Taylor M.S."/>
            <person name="Tegner J."/>
            <person name="Teichmann S.A."/>
            <person name="Ueda H.R."/>
            <person name="van Nimwegen E."/>
            <person name="Verardo R."/>
            <person name="Wei C.L."/>
            <person name="Yagi K."/>
            <person name="Yamanishi H."/>
            <person name="Zabarovsky E."/>
            <person name="Zhu S."/>
            <person name="Zimmer A."/>
            <person name="Hide W."/>
            <person name="Bult C."/>
            <person name="Grimmond S.M."/>
            <person name="Teasdale R.D."/>
            <person name="Liu E.T."/>
            <person name="Brusic V."/>
            <person name="Quackenbush J."/>
            <person name="Wahlestedt C."/>
            <person name="Mattick J.S."/>
            <person name="Hume D.A."/>
            <person name="Kai C."/>
            <person name="Sasaki D."/>
            <person name="Tomaru Y."/>
            <person name="Fukuda S."/>
            <person name="Kanamori-Katayama M."/>
            <person name="Suzuki M."/>
            <person name="Aoki J."/>
            <person name="Arakawa T."/>
            <person name="Iida J."/>
            <person name="Imamura K."/>
            <person name="Itoh M."/>
            <person name="Kato T."/>
            <person name="Kawaji H."/>
            <person name="Kawagashira N."/>
            <person name="Kawashima T."/>
            <person name="Kojima M."/>
            <person name="Kondo S."/>
            <person name="Konno H."/>
            <person name="Nakano K."/>
            <person name="Ninomiya N."/>
            <person name="Nishio T."/>
            <person name="Okada M."/>
            <person name="Plessy C."/>
            <person name="Shibata K."/>
            <person name="Shiraki T."/>
            <person name="Suzuki S."/>
            <person name="Tagami M."/>
            <person name="Waki K."/>
            <person name="Watahiki A."/>
            <person name="Okamura-Oho Y."/>
            <person name="Suzuki H."/>
            <person name="Kawai J."/>
            <person name="Hayashizaki Y."/>
        </authorList>
    </citation>
    <scope>NUCLEOTIDE SEQUENCE [LARGE SCALE MRNA]</scope>
    <source>
        <strain>C57BL/6J</strain>
        <tissue>Extraembryonic tissue</tissue>
        <tissue>Placenta</tissue>
    </source>
</reference>
<comment type="subcellular location">
    <subcellularLocation>
        <location evidence="6">Lysosome</location>
    </subcellularLocation>
</comment>
<comment type="tissue specificity">
    <text evidence="5">Placenta.</text>
</comment>
<comment type="developmental stage">
    <text evidence="5">Expressed in adult but not in embryo.</text>
</comment>
<comment type="similarity">
    <text evidence="3 4">Belongs to the peptidase C1 family.</text>
</comment>
<feature type="signal peptide" evidence="2">
    <location>
        <begin position="1"/>
        <end position="17"/>
    </location>
</feature>
<feature type="propeptide" id="PRO_0000026283" description="Activation peptide" evidence="2">
    <location>
        <begin position="18"/>
        <end position="114"/>
    </location>
</feature>
<feature type="chain" id="PRO_0000026284" description="Cathepsin R">
    <location>
        <begin position="115"/>
        <end position="334"/>
    </location>
</feature>
<feature type="active site" evidence="1">
    <location>
        <position position="139"/>
    </location>
</feature>
<feature type="active site" evidence="1">
    <location>
        <position position="277"/>
    </location>
</feature>
<feature type="active site" evidence="1">
    <location>
        <position position="301"/>
    </location>
</feature>
<feature type="glycosylation site" description="N-linked (GlcNAc...) asparagine" evidence="2">
    <location>
        <position position="269"/>
    </location>
</feature>
<feature type="disulfide bond" evidence="1">
    <location>
        <begin position="136"/>
        <end position="179"/>
    </location>
</feature>
<feature type="disulfide bond" evidence="1">
    <location>
        <begin position="170"/>
        <end position="212"/>
    </location>
</feature>
<feature type="disulfide bond" evidence="1">
    <location>
        <begin position="270"/>
        <end position="323"/>
    </location>
</feature>
<dbReference type="EC" id="3.4.22.-"/>
<dbReference type="EMBL" id="AF245399">
    <property type="protein sequence ID" value="AAF90051.1"/>
    <property type="molecule type" value="mRNA"/>
</dbReference>
<dbReference type="EMBL" id="AY014778">
    <property type="protein sequence ID" value="AAK00507.1"/>
    <property type="molecule type" value="mRNA"/>
</dbReference>
<dbReference type="EMBL" id="AK014432">
    <property type="protein sequence ID" value="BAB29345.1"/>
    <property type="molecule type" value="mRNA"/>
</dbReference>
<dbReference type="EMBL" id="AK005429">
    <property type="protein sequence ID" value="BAB24023.1"/>
    <property type="molecule type" value="mRNA"/>
</dbReference>
<dbReference type="CCDS" id="CCDS26585.1"/>
<dbReference type="RefSeq" id="NP_064680.1">
    <property type="nucleotide sequence ID" value="NM_020284.1"/>
</dbReference>
<dbReference type="SMR" id="Q9JIA9"/>
<dbReference type="FunCoup" id="Q9JIA9">
    <property type="interactions" value="26"/>
</dbReference>
<dbReference type="STRING" id="10090.ENSMUSP00000021889"/>
<dbReference type="MEROPS" id="C01.042"/>
<dbReference type="GlyCosmos" id="Q9JIA9">
    <property type="glycosylation" value="1 site, No reported glycans"/>
</dbReference>
<dbReference type="GlyGen" id="Q9JIA9">
    <property type="glycosylation" value="1 site"/>
</dbReference>
<dbReference type="PaxDb" id="10090-ENSMUSP00000021889"/>
<dbReference type="DNASU" id="56835"/>
<dbReference type="Ensembl" id="ENSMUST00000021889.6">
    <property type="protein sequence ID" value="ENSMUSP00000021889.5"/>
    <property type="gene ID" value="ENSMUSG00000055679.6"/>
</dbReference>
<dbReference type="GeneID" id="56835"/>
<dbReference type="KEGG" id="mmu:56835"/>
<dbReference type="UCSC" id="uc007qwe.1">
    <property type="organism name" value="mouse"/>
</dbReference>
<dbReference type="AGR" id="MGI:1861723"/>
<dbReference type="CTD" id="56835"/>
<dbReference type="MGI" id="MGI:1861723">
    <property type="gene designation" value="Ctsr"/>
</dbReference>
<dbReference type="VEuPathDB" id="HostDB:ENSMUSG00000055679"/>
<dbReference type="eggNOG" id="KOG1543">
    <property type="taxonomic scope" value="Eukaryota"/>
</dbReference>
<dbReference type="GeneTree" id="ENSGT00940000153321"/>
<dbReference type="HOGENOM" id="CLU_012184_1_2_1"/>
<dbReference type="InParanoid" id="Q9JIA9"/>
<dbReference type="OMA" id="IAMNAAY"/>
<dbReference type="OrthoDB" id="10253408at2759"/>
<dbReference type="PhylomeDB" id="Q9JIA9"/>
<dbReference type="TreeFam" id="TF313739"/>
<dbReference type="BioGRID-ORCS" id="56835">
    <property type="hits" value="2 hits in 79 CRISPR screens"/>
</dbReference>
<dbReference type="ChiTaRS" id="Ctsr">
    <property type="organism name" value="mouse"/>
</dbReference>
<dbReference type="PRO" id="PR:Q9JIA9"/>
<dbReference type="Proteomes" id="UP000000589">
    <property type="component" value="Chromosome 13"/>
</dbReference>
<dbReference type="RNAct" id="Q9JIA9">
    <property type="molecule type" value="protein"/>
</dbReference>
<dbReference type="Bgee" id="ENSMUSG00000055679">
    <property type="expression patterns" value="Expressed in placenta labyrinth and 14 other cell types or tissues"/>
</dbReference>
<dbReference type="ExpressionAtlas" id="Q9JIA9">
    <property type="expression patterns" value="baseline and differential"/>
</dbReference>
<dbReference type="GO" id="GO:0005764">
    <property type="term" value="C:lysosome"/>
    <property type="evidence" value="ECO:0000247"/>
    <property type="project" value="MGI"/>
</dbReference>
<dbReference type="GO" id="GO:0008234">
    <property type="term" value="F:cysteine-type peptidase activity"/>
    <property type="evidence" value="ECO:0000247"/>
    <property type="project" value="MGI"/>
</dbReference>
<dbReference type="GO" id="GO:0030163">
    <property type="term" value="P:protein catabolic process"/>
    <property type="evidence" value="ECO:0000247"/>
    <property type="project" value="MGI"/>
</dbReference>
<dbReference type="GO" id="GO:0006508">
    <property type="term" value="P:proteolysis"/>
    <property type="evidence" value="ECO:0007669"/>
    <property type="project" value="UniProtKB-KW"/>
</dbReference>
<dbReference type="CDD" id="cd02248">
    <property type="entry name" value="Peptidase_C1A"/>
    <property type="match status" value="1"/>
</dbReference>
<dbReference type="FunFam" id="3.90.70.10:FF:000006">
    <property type="entry name" value="Cathepsin S"/>
    <property type="match status" value="1"/>
</dbReference>
<dbReference type="Gene3D" id="3.90.70.10">
    <property type="entry name" value="Cysteine proteinases"/>
    <property type="match status" value="1"/>
</dbReference>
<dbReference type="InterPro" id="IPR038765">
    <property type="entry name" value="Papain-like_cys_pep_sf"/>
</dbReference>
<dbReference type="InterPro" id="IPR025661">
    <property type="entry name" value="Pept_asp_AS"/>
</dbReference>
<dbReference type="InterPro" id="IPR025660">
    <property type="entry name" value="Pept_his_AS"/>
</dbReference>
<dbReference type="InterPro" id="IPR013128">
    <property type="entry name" value="Peptidase_C1A"/>
</dbReference>
<dbReference type="InterPro" id="IPR000668">
    <property type="entry name" value="Peptidase_C1A_C"/>
</dbReference>
<dbReference type="InterPro" id="IPR039417">
    <property type="entry name" value="Peptidase_C1A_papain-like"/>
</dbReference>
<dbReference type="InterPro" id="IPR013201">
    <property type="entry name" value="Prot_inhib_I29"/>
</dbReference>
<dbReference type="PANTHER" id="PTHR12411">
    <property type="entry name" value="CYSTEINE PROTEASE FAMILY C1-RELATED"/>
    <property type="match status" value="1"/>
</dbReference>
<dbReference type="Pfam" id="PF08246">
    <property type="entry name" value="Inhibitor_I29"/>
    <property type="match status" value="1"/>
</dbReference>
<dbReference type="Pfam" id="PF00112">
    <property type="entry name" value="Peptidase_C1"/>
    <property type="match status" value="1"/>
</dbReference>
<dbReference type="PRINTS" id="PR00705">
    <property type="entry name" value="PAPAIN"/>
</dbReference>
<dbReference type="SMART" id="SM00848">
    <property type="entry name" value="Inhibitor_I29"/>
    <property type="match status" value="1"/>
</dbReference>
<dbReference type="SMART" id="SM00645">
    <property type="entry name" value="Pept_C1"/>
    <property type="match status" value="1"/>
</dbReference>
<dbReference type="SUPFAM" id="SSF54001">
    <property type="entry name" value="Cysteine proteinases"/>
    <property type="match status" value="1"/>
</dbReference>
<dbReference type="PROSITE" id="PS00640">
    <property type="entry name" value="THIOL_PROTEASE_ASN"/>
    <property type="match status" value="1"/>
</dbReference>
<dbReference type="PROSITE" id="PS00639">
    <property type="entry name" value="THIOL_PROTEASE_HIS"/>
    <property type="match status" value="1"/>
</dbReference>
<protein>
    <recommendedName>
        <fullName>Cathepsin R</fullName>
        <ecNumber>3.4.22.-</ecNumber>
    </recommendedName>
</protein>
<keyword id="KW-1015">Disulfide bond</keyword>
<keyword id="KW-0325">Glycoprotein</keyword>
<keyword id="KW-0378">Hydrolase</keyword>
<keyword id="KW-0458">Lysosome</keyword>
<keyword id="KW-0645">Protease</keyword>
<keyword id="KW-1185">Reference proteome</keyword>
<keyword id="KW-0732">Signal</keyword>
<keyword id="KW-0788">Thiol protease</keyword>
<keyword id="KW-0865">Zymogen</keyword>
<accession>Q9JIA9</accession>
<sequence>MAAVVFIAFLYLGVASGVPVLDSSLDAEWQDWKIKYNKSYSLKEEKLKRVVWEEKLKMIKLHNRENSLGKNGFTMKMNEFGDQTDEEFRKMMIEISVWTHREGKSIMKREAGSILPKFVDWRKKGYVTPVRRQGDCDACWAFAVTGAIEAQAIWQTGKLTPLSVQNLVDCSKPQGNNGCLGGDTYNAFQYVLHNGGLESEATYPYEGKDGPCRYNPKNSKAEITGFVSLPQSEDILMAAVATIGPITAGIDASHESFKNYKGGIYHEPNCSSDTVTHGVLVVGYGFKGIETDGNHYWLIKNSWGKRWGIRGYMKLAKDKNNHCGIASYAHYPTI</sequence>
<organism>
    <name type="scientific">Mus musculus</name>
    <name type="common">Mouse</name>
    <dbReference type="NCBI Taxonomy" id="10090"/>
    <lineage>
        <taxon>Eukaryota</taxon>
        <taxon>Metazoa</taxon>
        <taxon>Chordata</taxon>
        <taxon>Craniata</taxon>
        <taxon>Vertebrata</taxon>
        <taxon>Euteleostomi</taxon>
        <taxon>Mammalia</taxon>
        <taxon>Eutheria</taxon>
        <taxon>Euarchontoglires</taxon>
        <taxon>Glires</taxon>
        <taxon>Rodentia</taxon>
        <taxon>Myomorpha</taxon>
        <taxon>Muroidea</taxon>
        <taxon>Muridae</taxon>
        <taxon>Murinae</taxon>
        <taxon>Mus</taxon>
        <taxon>Mus</taxon>
    </lineage>
</organism>
<proteinExistence type="evidence at transcript level"/>
<evidence type="ECO:0000250" key="1"/>
<evidence type="ECO:0000255" key="2"/>
<evidence type="ECO:0000255" key="3">
    <source>
        <dbReference type="PROSITE-ProRule" id="PRU10089"/>
    </source>
</evidence>
<evidence type="ECO:0000255" key="4">
    <source>
        <dbReference type="PROSITE-ProRule" id="PRU10090"/>
    </source>
</evidence>
<evidence type="ECO:0000269" key="5">
    <source>
    </source>
</evidence>
<evidence type="ECO:0000305" key="6"/>
<name>CATR_MOUSE</name>